<evidence type="ECO:0000255" key="1">
    <source>
        <dbReference type="HAMAP-Rule" id="MF_01006"/>
    </source>
</evidence>
<reference key="1">
    <citation type="submission" date="2003-10" db="EMBL/GenBank/DDBJ databases">
        <title>The complete genome sequence of the alkaliphilic Bacillus clausii KSM-K16.</title>
        <authorList>
            <person name="Takaki Y."/>
            <person name="Kageyama Y."/>
            <person name="Shimamura S."/>
            <person name="Suzuki H."/>
            <person name="Nishi S."/>
            <person name="Hatada Y."/>
            <person name="Kawai S."/>
            <person name="Ito S."/>
            <person name="Horikoshi K."/>
        </authorList>
    </citation>
    <scope>NUCLEOTIDE SEQUENCE [LARGE SCALE GENOMIC DNA]</scope>
    <source>
        <strain>KSM-K16</strain>
    </source>
</reference>
<accession>Q5WCX5</accession>
<protein>
    <recommendedName>
        <fullName evidence="1">Undecaprenyl-diphosphatase 2</fullName>
        <ecNumber evidence="1">3.6.1.27</ecNumber>
    </recommendedName>
    <alternativeName>
        <fullName evidence="1">Bacitracin resistance protein 2</fullName>
    </alternativeName>
    <alternativeName>
        <fullName evidence="1">Undecaprenyl pyrophosphate phosphatase 2</fullName>
    </alternativeName>
</protein>
<feature type="chain" id="PRO_0000151108" description="Undecaprenyl-diphosphatase 2">
    <location>
        <begin position="1"/>
        <end position="275"/>
    </location>
</feature>
<feature type="transmembrane region" description="Helical" evidence="1">
    <location>
        <begin position="48"/>
        <end position="68"/>
    </location>
</feature>
<feature type="transmembrane region" description="Helical" evidence="1">
    <location>
        <begin position="90"/>
        <end position="110"/>
    </location>
</feature>
<feature type="transmembrane region" description="Helical" evidence="1">
    <location>
        <begin position="117"/>
        <end position="137"/>
    </location>
</feature>
<feature type="transmembrane region" description="Helical" evidence="1">
    <location>
        <begin position="154"/>
        <end position="174"/>
    </location>
</feature>
<feature type="transmembrane region" description="Helical" evidence="1">
    <location>
        <begin position="195"/>
        <end position="215"/>
    </location>
</feature>
<feature type="transmembrane region" description="Helical" evidence="1">
    <location>
        <begin position="223"/>
        <end position="243"/>
    </location>
</feature>
<feature type="transmembrane region" description="Helical" evidence="1">
    <location>
        <begin position="254"/>
        <end position="274"/>
    </location>
</feature>
<dbReference type="EC" id="3.6.1.27" evidence="1"/>
<dbReference type="EMBL" id="AP006627">
    <property type="protein sequence ID" value="BAD65785.1"/>
    <property type="molecule type" value="Genomic_DNA"/>
</dbReference>
<dbReference type="RefSeq" id="WP_011248093.1">
    <property type="nucleotide sequence ID" value="NC_006582.1"/>
</dbReference>
<dbReference type="SMR" id="Q5WCX5"/>
<dbReference type="STRING" id="66692.ABC3251"/>
<dbReference type="KEGG" id="bcl:ABC3251"/>
<dbReference type="eggNOG" id="COG1968">
    <property type="taxonomic scope" value="Bacteria"/>
</dbReference>
<dbReference type="HOGENOM" id="CLU_060296_2_0_9"/>
<dbReference type="OrthoDB" id="9808289at2"/>
<dbReference type="Proteomes" id="UP000001168">
    <property type="component" value="Chromosome"/>
</dbReference>
<dbReference type="GO" id="GO:0005886">
    <property type="term" value="C:plasma membrane"/>
    <property type="evidence" value="ECO:0007669"/>
    <property type="project" value="UniProtKB-SubCell"/>
</dbReference>
<dbReference type="GO" id="GO:0050380">
    <property type="term" value="F:undecaprenyl-diphosphatase activity"/>
    <property type="evidence" value="ECO:0007669"/>
    <property type="project" value="UniProtKB-UniRule"/>
</dbReference>
<dbReference type="GO" id="GO:0071555">
    <property type="term" value="P:cell wall organization"/>
    <property type="evidence" value="ECO:0007669"/>
    <property type="project" value="UniProtKB-KW"/>
</dbReference>
<dbReference type="GO" id="GO:0009252">
    <property type="term" value="P:peptidoglycan biosynthetic process"/>
    <property type="evidence" value="ECO:0007669"/>
    <property type="project" value="UniProtKB-KW"/>
</dbReference>
<dbReference type="GO" id="GO:0008360">
    <property type="term" value="P:regulation of cell shape"/>
    <property type="evidence" value="ECO:0007669"/>
    <property type="project" value="UniProtKB-KW"/>
</dbReference>
<dbReference type="GO" id="GO:0046677">
    <property type="term" value="P:response to antibiotic"/>
    <property type="evidence" value="ECO:0007669"/>
    <property type="project" value="UniProtKB-UniRule"/>
</dbReference>
<dbReference type="HAMAP" id="MF_01006">
    <property type="entry name" value="Undec_diphosphatase"/>
    <property type="match status" value="1"/>
</dbReference>
<dbReference type="InterPro" id="IPR003824">
    <property type="entry name" value="UppP"/>
</dbReference>
<dbReference type="NCBIfam" id="NF001390">
    <property type="entry name" value="PRK00281.1-4"/>
    <property type="match status" value="1"/>
</dbReference>
<dbReference type="NCBIfam" id="TIGR00753">
    <property type="entry name" value="undec_PP_bacA"/>
    <property type="match status" value="1"/>
</dbReference>
<dbReference type="PANTHER" id="PTHR30622">
    <property type="entry name" value="UNDECAPRENYL-DIPHOSPHATASE"/>
    <property type="match status" value="1"/>
</dbReference>
<dbReference type="PANTHER" id="PTHR30622:SF3">
    <property type="entry name" value="UNDECAPRENYL-DIPHOSPHATASE"/>
    <property type="match status" value="1"/>
</dbReference>
<dbReference type="Pfam" id="PF02673">
    <property type="entry name" value="BacA"/>
    <property type="match status" value="1"/>
</dbReference>
<proteinExistence type="inferred from homology"/>
<organism>
    <name type="scientific">Shouchella clausii (strain KSM-K16)</name>
    <name type="common">Alkalihalobacillus clausii</name>
    <dbReference type="NCBI Taxonomy" id="66692"/>
    <lineage>
        <taxon>Bacteria</taxon>
        <taxon>Bacillati</taxon>
        <taxon>Bacillota</taxon>
        <taxon>Bacilli</taxon>
        <taxon>Bacillales</taxon>
        <taxon>Bacillaceae</taxon>
        <taxon>Shouchella</taxon>
    </lineage>
</organism>
<keyword id="KW-0046">Antibiotic resistance</keyword>
<keyword id="KW-1003">Cell membrane</keyword>
<keyword id="KW-0133">Cell shape</keyword>
<keyword id="KW-0961">Cell wall biogenesis/degradation</keyword>
<keyword id="KW-0378">Hydrolase</keyword>
<keyword id="KW-0472">Membrane</keyword>
<keyword id="KW-0573">Peptidoglycan synthesis</keyword>
<keyword id="KW-1185">Reference proteome</keyword>
<keyword id="KW-0812">Transmembrane</keyword>
<keyword id="KW-1133">Transmembrane helix</keyword>
<name>UPPP2_SHOC1</name>
<sequence>MDVWEWVVAAILGLVEGLTEYAPVSSTGHMIIVDDLWLKSSELVGSQNAYVFKIVIQLGSILAVALLFKDRLLQLAGFKKQAATQSEGRGLTLGKVAVGLLPAAVLGLLFEDKMESIFHVRTVAFALIAGAFLMIAADFINKRNNKKKQQVDDISYKQALAIGLFQCLALWPGFSRSGSTISGGVMLGLTHRAAANFTFIMAIPIMVGASALSLIKNWDALDISLLPFYATGFISAFLVSLVVVRFFLKLINKIKLVPFALYRIALGLLLLFLFS</sequence>
<gene>
    <name evidence="1" type="primary">uppP2</name>
    <name type="ordered locus">ABC3251</name>
</gene>
<comment type="function">
    <text evidence="1">Catalyzes the dephosphorylation of undecaprenyl diphosphate (UPP). Confers resistance to bacitracin.</text>
</comment>
<comment type="catalytic activity">
    <reaction evidence="1">
        <text>di-trans,octa-cis-undecaprenyl diphosphate + H2O = di-trans,octa-cis-undecaprenyl phosphate + phosphate + H(+)</text>
        <dbReference type="Rhea" id="RHEA:28094"/>
        <dbReference type="ChEBI" id="CHEBI:15377"/>
        <dbReference type="ChEBI" id="CHEBI:15378"/>
        <dbReference type="ChEBI" id="CHEBI:43474"/>
        <dbReference type="ChEBI" id="CHEBI:58405"/>
        <dbReference type="ChEBI" id="CHEBI:60392"/>
        <dbReference type="EC" id="3.6.1.27"/>
    </reaction>
</comment>
<comment type="subcellular location">
    <subcellularLocation>
        <location evidence="1">Cell membrane</location>
        <topology evidence="1">Multi-pass membrane protein</topology>
    </subcellularLocation>
</comment>
<comment type="miscellaneous">
    <text>Bacitracin is thought to be involved in the inhibition of peptidoglycan synthesis by sequestering undecaprenyl diphosphate, thereby reducing the pool of lipid carrier available.</text>
</comment>
<comment type="similarity">
    <text evidence="1">Belongs to the UppP family.</text>
</comment>